<comment type="function">
    <text evidence="1">Is required not only for elongation of protein synthesis but also for the initiation of all mRNA translation through initiator tRNA(fMet) aminoacylation.</text>
</comment>
<comment type="catalytic activity">
    <reaction evidence="1">
        <text>tRNA(Met) + L-methionine + ATP = L-methionyl-tRNA(Met) + AMP + diphosphate</text>
        <dbReference type="Rhea" id="RHEA:13481"/>
        <dbReference type="Rhea" id="RHEA-COMP:9667"/>
        <dbReference type="Rhea" id="RHEA-COMP:9698"/>
        <dbReference type="ChEBI" id="CHEBI:30616"/>
        <dbReference type="ChEBI" id="CHEBI:33019"/>
        <dbReference type="ChEBI" id="CHEBI:57844"/>
        <dbReference type="ChEBI" id="CHEBI:78442"/>
        <dbReference type="ChEBI" id="CHEBI:78530"/>
        <dbReference type="ChEBI" id="CHEBI:456215"/>
        <dbReference type="EC" id="6.1.1.10"/>
    </reaction>
</comment>
<comment type="cofactor">
    <cofactor evidence="1">
        <name>Zn(2+)</name>
        <dbReference type="ChEBI" id="CHEBI:29105"/>
    </cofactor>
    <text evidence="1">Binds 1 zinc ion per subunit.</text>
</comment>
<comment type="subunit">
    <text evidence="1">Homodimer.</text>
</comment>
<comment type="subcellular location">
    <subcellularLocation>
        <location evidence="1">Cytoplasm</location>
    </subcellularLocation>
</comment>
<comment type="similarity">
    <text evidence="1">Belongs to the class-I aminoacyl-tRNA synthetase family. MetG type 1 subfamily.</text>
</comment>
<feature type="chain" id="PRO_0000331911" description="Methionine--tRNA ligase">
    <location>
        <begin position="1"/>
        <end position="676"/>
    </location>
</feature>
<feature type="domain" description="tRNA-binding" evidence="1">
    <location>
        <begin position="575"/>
        <end position="676"/>
    </location>
</feature>
<feature type="short sequence motif" description="'HIGH' region">
    <location>
        <begin position="15"/>
        <end position="25"/>
    </location>
</feature>
<feature type="short sequence motif" description="'KMSKS' region">
    <location>
        <begin position="332"/>
        <end position="336"/>
    </location>
</feature>
<feature type="binding site" evidence="1">
    <location>
        <position position="146"/>
    </location>
    <ligand>
        <name>Zn(2+)</name>
        <dbReference type="ChEBI" id="CHEBI:29105"/>
    </ligand>
</feature>
<feature type="binding site" evidence="1">
    <location>
        <position position="149"/>
    </location>
    <ligand>
        <name>Zn(2+)</name>
        <dbReference type="ChEBI" id="CHEBI:29105"/>
    </ligand>
</feature>
<feature type="binding site" evidence="1">
    <location>
        <position position="159"/>
    </location>
    <ligand>
        <name>Zn(2+)</name>
        <dbReference type="ChEBI" id="CHEBI:29105"/>
    </ligand>
</feature>
<feature type="binding site" evidence="1">
    <location>
        <position position="162"/>
    </location>
    <ligand>
        <name>Zn(2+)</name>
        <dbReference type="ChEBI" id="CHEBI:29105"/>
    </ligand>
</feature>
<feature type="binding site" evidence="1">
    <location>
        <position position="335"/>
    </location>
    <ligand>
        <name>ATP</name>
        <dbReference type="ChEBI" id="CHEBI:30616"/>
    </ligand>
</feature>
<evidence type="ECO:0000255" key="1">
    <source>
        <dbReference type="HAMAP-Rule" id="MF_00098"/>
    </source>
</evidence>
<sequence>MATSQRKILVTSALPYANGPIHLGHMLEYIQTDIWSRYQKLRGHECHYICADDAHGTPIMLKAQQLGMAPEEMIAQVNKEHQQDFADFNIAFDNYHSTHSEENRVLASDIYLKLRANGYIKSKSISQLFDPEKSMFLPDRFVKGTCPKCKSPDQYGDNCDACGATYSPTELINPKSAVSGATPVMKDTEHFFFDLPAFEDMLKEWTRSGALQTEMANKLDEWFEQGLQQWDITRDAPYFGFEIPDAPGKYFYVWLDAPIGYMGSFKNLCDKRPELSFDEFWAKDSKAEVYHFIGKDIVYFHSLFWPAMLHGSGYRQPNSVYAHGYVTVNGAKMSKSKGTFIKARTYLDHLDPEYLRYYYAAKLSSRIDDLDLNLEDFAQRVNSDLVGKLVNLASRTAGFITKRFDGKLAKIADTTLTDAFLAKQEQIAEFYETREYGKAMREIMALADIANGFVADAAPWQLVKQDDQQEAAHQVCSNALNLFRILVTYLKPVLPRLALDVEAFFQQTLTWDSLGQDMAGHEIAPFKAMMQRVELDKVNAMVADSKENLQATSEPEAPKGPLASDPISDTINYEDFAKIDLRIARIVKAEHVAEADKLLKLQLDIGGETRQVFAGIKSAYSPEDLEGKLTVMVANLAPRKMRFGMSEGMVLAAGPGGSDLWILEPHEGAQPGMRVK</sequence>
<proteinExistence type="inferred from homology"/>
<dbReference type="EC" id="6.1.1.10" evidence="1"/>
<dbReference type="EMBL" id="CP000444">
    <property type="protein sequence ID" value="ABI42723.1"/>
    <property type="molecule type" value="Genomic_DNA"/>
</dbReference>
<dbReference type="SMR" id="Q0HVY2"/>
<dbReference type="KEGG" id="shm:Shewmr7_1730"/>
<dbReference type="HOGENOM" id="CLU_009710_7_0_6"/>
<dbReference type="GO" id="GO:0005829">
    <property type="term" value="C:cytosol"/>
    <property type="evidence" value="ECO:0007669"/>
    <property type="project" value="TreeGrafter"/>
</dbReference>
<dbReference type="GO" id="GO:0005524">
    <property type="term" value="F:ATP binding"/>
    <property type="evidence" value="ECO:0007669"/>
    <property type="project" value="UniProtKB-UniRule"/>
</dbReference>
<dbReference type="GO" id="GO:0046872">
    <property type="term" value="F:metal ion binding"/>
    <property type="evidence" value="ECO:0007669"/>
    <property type="project" value="UniProtKB-KW"/>
</dbReference>
<dbReference type="GO" id="GO:0004825">
    <property type="term" value="F:methionine-tRNA ligase activity"/>
    <property type="evidence" value="ECO:0007669"/>
    <property type="project" value="UniProtKB-UniRule"/>
</dbReference>
<dbReference type="GO" id="GO:0000049">
    <property type="term" value="F:tRNA binding"/>
    <property type="evidence" value="ECO:0007669"/>
    <property type="project" value="UniProtKB-KW"/>
</dbReference>
<dbReference type="GO" id="GO:0006431">
    <property type="term" value="P:methionyl-tRNA aminoacylation"/>
    <property type="evidence" value="ECO:0007669"/>
    <property type="project" value="UniProtKB-UniRule"/>
</dbReference>
<dbReference type="CDD" id="cd07957">
    <property type="entry name" value="Anticodon_Ia_Met"/>
    <property type="match status" value="1"/>
</dbReference>
<dbReference type="CDD" id="cd00814">
    <property type="entry name" value="MetRS_core"/>
    <property type="match status" value="1"/>
</dbReference>
<dbReference type="CDD" id="cd02800">
    <property type="entry name" value="tRNA_bind_EcMetRS_like"/>
    <property type="match status" value="1"/>
</dbReference>
<dbReference type="FunFam" id="1.10.730.10:FF:000005">
    <property type="entry name" value="Methionine--tRNA ligase"/>
    <property type="match status" value="1"/>
</dbReference>
<dbReference type="FunFam" id="2.20.28.20:FF:000001">
    <property type="entry name" value="Methionine--tRNA ligase"/>
    <property type="match status" value="1"/>
</dbReference>
<dbReference type="FunFam" id="2.40.50.140:FF:000042">
    <property type="entry name" value="Methionine--tRNA ligase"/>
    <property type="match status" value="1"/>
</dbReference>
<dbReference type="Gene3D" id="3.40.50.620">
    <property type="entry name" value="HUPs"/>
    <property type="match status" value="1"/>
</dbReference>
<dbReference type="Gene3D" id="1.10.730.10">
    <property type="entry name" value="Isoleucyl-tRNA Synthetase, Domain 1"/>
    <property type="match status" value="1"/>
</dbReference>
<dbReference type="Gene3D" id="2.20.28.20">
    <property type="entry name" value="Methionyl-tRNA synthetase, Zn-domain"/>
    <property type="match status" value="1"/>
</dbReference>
<dbReference type="Gene3D" id="2.40.50.140">
    <property type="entry name" value="Nucleic acid-binding proteins"/>
    <property type="match status" value="1"/>
</dbReference>
<dbReference type="HAMAP" id="MF_00098">
    <property type="entry name" value="Met_tRNA_synth_type1"/>
    <property type="match status" value="1"/>
</dbReference>
<dbReference type="InterPro" id="IPR001412">
    <property type="entry name" value="aa-tRNA-synth_I_CS"/>
</dbReference>
<dbReference type="InterPro" id="IPR041872">
    <property type="entry name" value="Anticodon_Met"/>
</dbReference>
<dbReference type="InterPro" id="IPR004495">
    <property type="entry name" value="Met-tRNA-synth_bsu_C"/>
</dbReference>
<dbReference type="InterPro" id="IPR023458">
    <property type="entry name" value="Met-tRNA_ligase_1"/>
</dbReference>
<dbReference type="InterPro" id="IPR014758">
    <property type="entry name" value="Met-tRNA_synth"/>
</dbReference>
<dbReference type="InterPro" id="IPR015413">
    <property type="entry name" value="Methionyl/Leucyl_tRNA_Synth"/>
</dbReference>
<dbReference type="InterPro" id="IPR033911">
    <property type="entry name" value="MetRS_core"/>
</dbReference>
<dbReference type="InterPro" id="IPR029038">
    <property type="entry name" value="MetRS_Zn"/>
</dbReference>
<dbReference type="InterPro" id="IPR012340">
    <property type="entry name" value="NA-bd_OB-fold"/>
</dbReference>
<dbReference type="InterPro" id="IPR014729">
    <property type="entry name" value="Rossmann-like_a/b/a_fold"/>
</dbReference>
<dbReference type="InterPro" id="IPR002547">
    <property type="entry name" value="tRNA-bd_dom"/>
</dbReference>
<dbReference type="InterPro" id="IPR009080">
    <property type="entry name" value="tRNAsynth_Ia_anticodon-bd"/>
</dbReference>
<dbReference type="NCBIfam" id="TIGR00398">
    <property type="entry name" value="metG"/>
    <property type="match status" value="1"/>
</dbReference>
<dbReference type="NCBIfam" id="TIGR00399">
    <property type="entry name" value="metG_C_term"/>
    <property type="match status" value="1"/>
</dbReference>
<dbReference type="NCBIfam" id="NF001100">
    <property type="entry name" value="PRK00133.1"/>
    <property type="match status" value="1"/>
</dbReference>
<dbReference type="PANTHER" id="PTHR45765">
    <property type="entry name" value="METHIONINE--TRNA LIGASE"/>
    <property type="match status" value="1"/>
</dbReference>
<dbReference type="PANTHER" id="PTHR45765:SF1">
    <property type="entry name" value="METHIONINE--TRNA LIGASE, CYTOPLASMIC"/>
    <property type="match status" value="1"/>
</dbReference>
<dbReference type="Pfam" id="PF19303">
    <property type="entry name" value="Anticodon_3"/>
    <property type="match status" value="1"/>
</dbReference>
<dbReference type="Pfam" id="PF09334">
    <property type="entry name" value="tRNA-synt_1g"/>
    <property type="match status" value="1"/>
</dbReference>
<dbReference type="Pfam" id="PF01588">
    <property type="entry name" value="tRNA_bind"/>
    <property type="match status" value="1"/>
</dbReference>
<dbReference type="PRINTS" id="PR01041">
    <property type="entry name" value="TRNASYNTHMET"/>
</dbReference>
<dbReference type="SUPFAM" id="SSF47323">
    <property type="entry name" value="Anticodon-binding domain of a subclass of class I aminoacyl-tRNA synthetases"/>
    <property type="match status" value="1"/>
</dbReference>
<dbReference type="SUPFAM" id="SSF57770">
    <property type="entry name" value="Methionyl-tRNA synthetase (MetRS), Zn-domain"/>
    <property type="match status" value="1"/>
</dbReference>
<dbReference type="SUPFAM" id="SSF50249">
    <property type="entry name" value="Nucleic acid-binding proteins"/>
    <property type="match status" value="1"/>
</dbReference>
<dbReference type="SUPFAM" id="SSF52374">
    <property type="entry name" value="Nucleotidylyl transferase"/>
    <property type="match status" value="1"/>
</dbReference>
<dbReference type="PROSITE" id="PS00178">
    <property type="entry name" value="AA_TRNA_LIGASE_I"/>
    <property type="match status" value="1"/>
</dbReference>
<dbReference type="PROSITE" id="PS50886">
    <property type="entry name" value="TRBD"/>
    <property type="match status" value="1"/>
</dbReference>
<keyword id="KW-0030">Aminoacyl-tRNA synthetase</keyword>
<keyword id="KW-0067">ATP-binding</keyword>
<keyword id="KW-0963">Cytoplasm</keyword>
<keyword id="KW-0436">Ligase</keyword>
<keyword id="KW-0479">Metal-binding</keyword>
<keyword id="KW-0547">Nucleotide-binding</keyword>
<keyword id="KW-0648">Protein biosynthesis</keyword>
<keyword id="KW-0694">RNA-binding</keyword>
<keyword id="KW-0820">tRNA-binding</keyword>
<keyword id="KW-0862">Zinc</keyword>
<accession>Q0HVY2</accession>
<name>SYM_SHESR</name>
<organism>
    <name type="scientific">Shewanella sp. (strain MR-7)</name>
    <dbReference type="NCBI Taxonomy" id="60481"/>
    <lineage>
        <taxon>Bacteria</taxon>
        <taxon>Pseudomonadati</taxon>
        <taxon>Pseudomonadota</taxon>
        <taxon>Gammaproteobacteria</taxon>
        <taxon>Alteromonadales</taxon>
        <taxon>Shewanellaceae</taxon>
        <taxon>Shewanella</taxon>
    </lineage>
</organism>
<reference key="1">
    <citation type="submission" date="2006-08" db="EMBL/GenBank/DDBJ databases">
        <title>Complete sequence of chromosome 1 of Shewanella sp. MR-7.</title>
        <authorList>
            <person name="Copeland A."/>
            <person name="Lucas S."/>
            <person name="Lapidus A."/>
            <person name="Barry K."/>
            <person name="Detter J.C."/>
            <person name="Glavina del Rio T."/>
            <person name="Hammon N."/>
            <person name="Israni S."/>
            <person name="Dalin E."/>
            <person name="Tice H."/>
            <person name="Pitluck S."/>
            <person name="Kiss H."/>
            <person name="Brettin T."/>
            <person name="Bruce D."/>
            <person name="Han C."/>
            <person name="Tapia R."/>
            <person name="Gilna P."/>
            <person name="Schmutz J."/>
            <person name="Larimer F."/>
            <person name="Land M."/>
            <person name="Hauser L."/>
            <person name="Kyrpides N."/>
            <person name="Mikhailova N."/>
            <person name="Nealson K."/>
            <person name="Konstantinidis K."/>
            <person name="Klappenbach J."/>
            <person name="Tiedje J."/>
            <person name="Richardson P."/>
        </authorList>
    </citation>
    <scope>NUCLEOTIDE SEQUENCE [LARGE SCALE GENOMIC DNA]</scope>
    <source>
        <strain>MR-7</strain>
    </source>
</reference>
<protein>
    <recommendedName>
        <fullName evidence="1">Methionine--tRNA ligase</fullName>
        <ecNumber evidence="1">6.1.1.10</ecNumber>
    </recommendedName>
    <alternativeName>
        <fullName evidence="1">Methionyl-tRNA synthetase</fullName>
        <shortName evidence="1">MetRS</shortName>
    </alternativeName>
</protein>
<gene>
    <name evidence="1" type="primary">metG</name>
    <name type="ordered locus">Shewmr7_1730</name>
</gene>